<gene>
    <name evidence="8" type="primary">spop-1</name>
    <name evidence="8" type="synonym">bath-43</name>
    <name evidence="8" type="ORF">T16H12.5</name>
</gene>
<proteinExistence type="evidence at protein level"/>
<reference key="1">
    <citation type="journal article" date="1998" name="Science">
        <title>Genome sequence of the nematode C. elegans: a platform for investigating biology.</title>
        <authorList>
            <consortium name="The C. elegans sequencing consortium"/>
        </authorList>
    </citation>
    <scope>NUCLEOTIDE SEQUENCE [LARGE SCALE GENOMIC DNA]</scope>
    <source>
        <strain>Bristol N2</strain>
    </source>
</reference>
<reference key="2">
    <citation type="journal article" date="2006" name="Dev. Cell">
        <title>A hedgehog-induced BTB protein modulates hedgehog signaling by degrading Ci/Gli transcription factor.</title>
        <authorList>
            <person name="Zhang Q."/>
            <person name="Zhang L."/>
            <person name="Wang B."/>
            <person name="Ou C.-Y."/>
            <person name="Chien C.-T."/>
            <person name="Jiang J."/>
        </authorList>
    </citation>
    <scope>IDENTIFICATION</scope>
    <scope>FUNCTION</scope>
</reference>
<reference key="3">
    <citation type="journal article" date="2021" name="Proc. Natl. Acad. Sci. U.S.A.">
        <title>The nuclear ubiquitin ligase adaptor SPOP is a conserved regulator of C9orf72 dipeptide toxicity.</title>
        <authorList>
            <person name="Snoznik C."/>
            <person name="Medvedeva V."/>
            <person name="Mojsilovic-Petrovic J."/>
            <person name="Rudich P."/>
            <person name="Oosten J."/>
            <person name="Kalb R.G."/>
            <person name="Lamitina T."/>
        </authorList>
    </citation>
    <scope>FUNCTION</scope>
    <scope>SUBCELLULAR LOCATION</scope>
    <scope>DISRUPTION PHENOTYPE</scope>
    <scope>MUTAGENESIS OF 187-TYR--TYR-451; TRP-195 AND PHE-197</scope>
</reference>
<keyword id="KW-0025">Alternative splicing</keyword>
<keyword id="KW-0539">Nucleus</keyword>
<keyword id="KW-1185">Reference proteome</keyword>
<keyword id="KW-0833">Ubl conjugation pathway</keyword>
<sequence length="451" mass="51062">MILLAKFRNLYSKSRANDTISEGDKPEKATGDLEAGRNRLVSMEVGMGNDEVVSSGSGNSAHGRSISPSPSSASHGDPLLPVAENWCHTQVKVVKFNYMWTINNFSFCREEMGEVLKSSTFSAGCNDKLKWCLRINPKGLDEESRDYLSLYLLLVQCNKSEVRAKFKFSILNAKREETKAMESQRAYRFVQGKDWGFKKFIRRDFLLDEANGLLPGDRLSIFCEVSVVAETVNVTGQTNVSQLFKVPPCRLADDMYGLFDNKQFSDFTLVCKSDLGSPTQTFHIHKAILAARSRVFSAMFEHHMQESDTNMTTVDDIEPEVMRELLVYMYTGQTKYIEQMAQSLIAAADKYQLDRLKVMCEQALCYQLTTDNASLTLMLADMYSASQLRAHSINFINVNANEVMDTEGWEDLVRDHPKLLEEVFRALATQQTPPVVLVQPPKKRPKHNCPY</sequence>
<protein>
    <recommendedName>
        <fullName evidence="7">Speckle-type POZ protein homolog</fullName>
    </recommendedName>
    <alternativeName>
        <fullName evidence="7">BTB and MATH domain-containing protein 43</fullName>
    </alternativeName>
    <alternativeName>
        <fullName evidence="7">HIB homolog</fullName>
    </alternativeName>
</protein>
<organism>
    <name type="scientific">Caenorhabditis elegans</name>
    <dbReference type="NCBI Taxonomy" id="6239"/>
    <lineage>
        <taxon>Eukaryota</taxon>
        <taxon>Metazoa</taxon>
        <taxon>Ecdysozoa</taxon>
        <taxon>Nematoda</taxon>
        <taxon>Chromadorea</taxon>
        <taxon>Rhabditida</taxon>
        <taxon>Rhabditina</taxon>
        <taxon>Rhabditomorpha</taxon>
        <taxon>Rhabditoidea</taxon>
        <taxon>Rhabditidae</taxon>
        <taxon>Peloderinae</taxon>
        <taxon>Caenorhabditis</taxon>
    </lineage>
</organism>
<evidence type="ECO:0000250" key="1">
    <source>
        <dbReference type="UniProtKB" id="O43791"/>
    </source>
</evidence>
<evidence type="ECO:0000255" key="2">
    <source>
        <dbReference type="PROSITE-ProRule" id="PRU00037"/>
    </source>
</evidence>
<evidence type="ECO:0000255" key="3">
    <source>
        <dbReference type="PROSITE-ProRule" id="PRU00129"/>
    </source>
</evidence>
<evidence type="ECO:0000256" key="4">
    <source>
        <dbReference type="SAM" id="MobiDB-lite"/>
    </source>
</evidence>
<evidence type="ECO:0000269" key="5">
    <source>
    </source>
</evidence>
<evidence type="ECO:0000269" key="6">
    <source>
    </source>
</evidence>
<evidence type="ECO:0000305" key="7"/>
<evidence type="ECO:0000312" key="8">
    <source>
        <dbReference type="WormBase" id="T16H12.5a"/>
    </source>
</evidence>
<evidence type="ECO:0000312" key="9">
    <source>
        <dbReference type="WormBase" id="T16H12.5b"/>
    </source>
</evidence>
<dbReference type="EMBL" id="BX284603">
    <property type="protein sequence ID" value="CAA83138.2"/>
    <property type="molecule type" value="Genomic_DNA"/>
</dbReference>
<dbReference type="EMBL" id="BX284603">
    <property type="protein sequence ID" value="CAI58651.1"/>
    <property type="molecule type" value="Genomic_DNA"/>
</dbReference>
<dbReference type="PIR" id="S42384">
    <property type="entry name" value="S42384"/>
</dbReference>
<dbReference type="RefSeq" id="NP_001022764.1">
    <molecule id="P34568-1"/>
    <property type="nucleotide sequence ID" value="NM_001027593.2"/>
</dbReference>
<dbReference type="RefSeq" id="NP_001022765.1">
    <molecule id="P34568-2"/>
    <property type="nucleotide sequence ID" value="NM_001027594.6"/>
</dbReference>
<dbReference type="SMR" id="P34568"/>
<dbReference type="BioGRID" id="41616">
    <property type="interactions" value="4"/>
</dbReference>
<dbReference type="FunCoup" id="P34568">
    <property type="interactions" value="2206"/>
</dbReference>
<dbReference type="IntAct" id="P34568">
    <property type="interactions" value="2"/>
</dbReference>
<dbReference type="STRING" id="6239.T16H12.5a.1"/>
<dbReference type="PaxDb" id="6239-T16H12.5a"/>
<dbReference type="EnsemblMetazoa" id="T16H12.5a.1">
    <molecule id="P34568-1"/>
    <property type="protein sequence ID" value="T16H12.5a.1"/>
    <property type="gene ID" value="WBGene00011815"/>
</dbReference>
<dbReference type="EnsemblMetazoa" id="T16H12.5b.1">
    <molecule id="P34568-2"/>
    <property type="protein sequence ID" value="T16H12.5b.1"/>
    <property type="gene ID" value="WBGene00011815"/>
</dbReference>
<dbReference type="GeneID" id="176422"/>
<dbReference type="KEGG" id="cel:CELE_T16H12.5"/>
<dbReference type="UCSC" id="T16H12.5b.2">
    <molecule id="P34568-1"/>
    <property type="organism name" value="c. elegans"/>
</dbReference>
<dbReference type="AGR" id="WB:WBGene00011815"/>
<dbReference type="CTD" id="176422"/>
<dbReference type="WormBase" id="T16H12.5a">
    <molecule id="P34568-1"/>
    <property type="protein sequence ID" value="CE29054"/>
    <property type="gene ID" value="WBGene00011815"/>
    <property type="gene designation" value="spop-1"/>
</dbReference>
<dbReference type="WormBase" id="T16H12.5b">
    <molecule id="P34568-2"/>
    <property type="protein sequence ID" value="CE00510"/>
    <property type="gene ID" value="WBGene00011815"/>
    <property type="gene designation" value="spop-1"/>
</dbReference>
<dbReference type="eggNOG" id="KOG1987">
    <property type="taxonomic scope" value="Eukaryota"/>
</dbReference>
<dbReference type="GeneTree" id="ENSGT00940000155953"/>
<dbReference type="InParanoid" id="P34568"/>
<dbReference type="OMA" id="IKFNYMW"/>
<dbReference type="OrthoDB" id="6359816at2759"/>
<dbReference type="PhylomeDB" id="P34568"/>
<dbReference type="Reactome" id="R-CEL-5632684">
    <property type="pathway name" value="Hedgehog 'on' state"/>
</dbReference>
<dbReference type="Reactome" id="R-CEL-9706019">
    <property type="pathway name" value="RHOBTB3 ATPase cycle"/>
</dbReference>
<dbReference type="UniPathway" id="UPA00143"/>
<dbReference type="PRO" id="PR:P34568"/>
<dbReference type="Proteomes" id="UP000001940">
    <property type="component" value="Chromosome III"/>
</dbReference>
<dbReference type="Bgee" id="WBGene00011815">
    <property type="expression patterns" value="Expressed in pharyngeal muscle cell (C elegans) and 4 other cell types or tissues"/>
</dbReference>
<dbReference type="GO" id="GO:0005737">
    <property type="term" value="C:cytoplasm"/>
    <property type="evidence" value="ECO:0000318"/>
    <property type="project" value="GO_Central"/>
</dbReference>
<dbReference type="GO" id="GO:0016607">
    <property type="term" value="C:nuclear speck"/>
    <property type="evidence" value="ECO:0007669"/>
    <property type="project" value="UniProtKB-SubCell"/>
</dbReference>
<dbReference type="GO" id="GO:0005634">
    <property type="term" value="C:nucleus"/>
    <property type="evidence" value="ECO:0000318"/>
    <property type="project" value="GO_Central"/>
</dbReference>
<dbReference type="GO" id="GO:0031625">
    <property type="term" value="F:ubiquitin protein ligase binding"/>
    <property type="evidence" value="ECO:0000318"/>
    <property type="project" value="GO_Central"/>
</dbReference>
<dbReference type="GO" id="GO:0043161">
    <property type="term" value="P:proteasome-mediated ubiquitin-dependent protein catabolic process"/>
    <property type="evidence" value="ECO:0000318"/>
    <property type="project" value="GO_Central"/>
</dbReference>
<dbReference type="GO" id="GO:0016567">
    <property type="term" value="P:protein ubiquitination"/>
    <property type="evidence" value="ECO:0007669"/>
    <property type="project" value="UniProtKB-UniPathway"/>
</dbReference>
<dbReference type="GO" id="GO:0030162">
    <property type="term" value="P:regulation of proteolysis"/>
    <property type="evidence" value="ECO:0000318"/>
    <property type="project" value="GO_Central"/>
</dbReference>
<dbReference type="CDD" id="cd14821">
    <property type="entry name" value="BACK_SPOP_like"/>
    <property type="match status" value="1"/>
</dbReference>
<dbReference type="CDD" id="cd03774">
    <property type="entry name" value="MATH_SPOP"/>
    <property type="match status" value="1"/>
</dbReference>
<dbReference type="FunFam" id="3.30.710.10:FF:000244">
    <property type="entry name" value="Bath-43"/>
    <property type="match status" value="1"/>
</dbReference>
<dbReference type="FunFam" id="2.60.210.10:FF:000028">
    <property type="entry name" value="Speckle-type POZ protein-like"/>
    <property type="match status" value="1"/>
</dbReference>
<dbReference type="Gene3D" id="6.10.250.3030">
    <property type="match status" value="1"/>
</dbReference>
<dbReference type="Gene3D" id="6.20.250.50">
    <property type="match status" value="1"/>
</dbReference>
<dbReference type="Gene3D" id="2.60.210.10">
    <property type="entry name" value="Apoptosis, Tumor Necrosis Factor Receptor Associated Protein 2, Chain A"/>
    <property type="match status" value="1"/>
</dbReference>
<dbReference type="Gene3D" id="3.30.710.10">
    <property type="entry name" value="Potassium Channel Kv1.1, Chain A"/>
    <property type="match status" value="1"/>
</dbReference>
<dbReference type="InterPro" id="IPR056423">
    <property type="entry name" value="BACK_BPM_SPOP"/>
</dbReference>
<dbReference type="InterPro" id="IPR000210">
    <property type="entry name" value="BTB/POZ_dom"/>
</dbReference>
<dbReference type="InterPro" id="IPR002083">
    <property type="entry name" value="MATH/TRAF_dom"/>
</dbReference>
<dbReference type="InterPro" id="IPR011333">
    <property type="entry name" value="SKP1/BTB/POZ_sf"/>
</dbReference>
<dbReference type="InterPro" id="IPR008974">
    <property type="entry name" value="TRAF-like"/>
</dbReference>
<dbReference type="PANTHER" id="PTHR24413">
    <property type="entry name" value="SPECKLE-TYPE POZ PROTEIN"/>
    <property type="match status" value="1"/>
</dbReference>
<dbReference type="Pfam" id="PF24570">
    <property type="entry name" value="BACK_BPM_SPOP"/>
    <property type="match status" value="1"/>
</dbReference>
<dbReference type="Pfam" id="PF00651">
    <property type="entry name" value="BTB"/>
    <property type="match status" value="1"/>
</dbReference>
<dbReference type="Pfam" id="PF22486">
    <property type="entry name" value="MATH_2"/>
    <property type="match status" value="1"/>
</dbReference>
<dbReference type="SMART" id="SM00225">
    <property type="entry name" value="BTB"/>
    <property type="match status" value="1"/>
</dbReference>
<dbReference type="SMART" id="SM00061">
    <property type="entry name" value="MATH"/>
    <property type="match status" value="1"/>
</dbReference>
<dbReference type="SUPFAM" id="SSF54695">
    <property type="entry name" value="POZ domain"/>
    <property type="match status" value="1"/>
</dbReference>
<dbReference type="SUPFAM" id="SSF49599">
    <property type="entry name" value="TRAF domain-like"/>
    <property type="match status" value="1"/>
</dbReference>
<dbReference type="PROSITE" id="PS50097">
    <property type="entry name" value="BTB"/>
    <property type="match status" value="1"/>
</dbReference>
<dbReference type="PROSITE" id="PS50144">
    <property type="entry name" value="MATH"/>
    <property type="match status" value="1"/>
</dbReference>
<comment type="function">
    <text evidence="5 6">Mediates ubiquitination and proteasomal degradation of target proteins, most likely in complex with cul-3 (PubMed:16740475). May promote the degradation of bromodomain-containing proteins such as bet-1 (PubMed:34593637).</text>
</comment>
<comment type="pathway">
    <text>Protein modification; protein ubiquitination.</text>
</comment>
<comment type="subcellular location">
    <subcellularLocation>
        <location evidence="6">Nucleus</location>
    </subcellularLocation>
    <subcellularLocation>
        <location evidence="1">Nucleus speckle</location>
    </subcellularLocation>
</comment>
<comment type="alternative products">
    <event type="alternative splicing"/>
    <isoform>
        <id>P34568-1</id>
        <name evidence="8">a</name>
        <sequence type="displayed"/>
    </isoform>
    <isoform>
        <id>P34568-2</id>
        <name evidence="9">b</name>
        <sequence type="described" ref="VSP_014361"/>
    </isoform>
</comment>
<comment type="domain">
    <text evidence="1">The BTB (POZ) domain mediates dimerization and interaction with a cullin.</text>
</comment>
<comment type="domain">
    <text evidence="1">The MATH domain mediates interaction with protein-ubiquitin ligase substrates.</text>
</comment>
<comment type="disruption phenotype">
    <text evidence="6">RNAi-mediated knockdown suppresses the age-dependent paralysis and growth arrest induced by exogenous dipeptide repeat proteins PR50 and GR50.</text>
</comment>
<comment type="similarity">
    <text evidence="7">Belongs to the Tdpoz family.</text>
</comment>
<accession>P34568</accession>
<accession>Q5CZ49</accession>
<feature type="chain" id="PRO_0000065467" description="Speckle-type POZ protein homolog">
    <location>
        <begin position="1"/>
        <end position="451"/>
    </location>
</feature>
<feature type="domain" description="MATH" evidence="3">
    <location>
        <begin position="95"/>
        <end position="225"/>
    </location>
</feature>
<feature type="domain" description="BTB" evidence="2">
    <location>
        <begin position="265"/>
        <end position="338"/>
    </location>
</feature>
<feature type="region of interest" description="Disordered" evidence="4">
    <location>
        <begin position="51"/>
        <end position="75"/>
    </location>
</feature>
<feature type="compositionally biased region" description="Low complexity" evidence="4">
    <location>
        <begin position="60"/>
        <end position="75"/>
    </location>
</feature>
<feature type="splice variant" id="VSP_014361" description="In isoform b." evidence="7">
    <location>
        <begin position="1"/>
        <end position="42"/>
    </location>
</feature>
<feature type="mutagenesis site" description="In gk630214; suppresses the age-dependent paralysis and growth arrest induced by exogenous dipeptide repeat proteins PR50 and GR50. The age-dependent paralysis phenotype is further suppressed in a bet-1 RNAi background." evidence="6">
    <location>
        <begin position="187"/>
        <end position="451"/>
    </location>
</feature>
<feature type="mutagenesis site" description="In dr95; suppresses the age-dependent paralysis and growth arrest induced by exogenous dipeptide repeat protein PR50. The age-dependent paralysis phenotype is further suppressed in a bet-1 RNAi background." evidence="6">
    <original>W</original>
    <variation>G</variation>
    <location>
        <position position="195"/>
    </location>
</feature>
<feature type="mutagenesis site" description="In dr100; suppresses the age-dependent paralysis and growth arrest induced by exogenous dipeptide repeat protein PR50. Decreases spop-1 protein levels." evidence="6">
    <original>F</original>
    <variation>V</variation>
    <location>
        <position position="197"/>
    </location>
</feature>
<name>SPOP_CAEEL</name>